<evidence type="ECO:0000255" key="1">
    <source>
        <dbReference type="HAMAP-Rule" id="MF_00632"/>
    </source>
</evidence>
<name>Y2183_AZOSB</name>
<sequence length="161" mass="17937">MPSFDITSEVDEPSLRNSVDVANSKIAGRHDFKGTSANVELKEKLMTLYGDSDFQLDQMKAILLPEMTKKKVDVRCLEYGDVQKVSGNKVKQEVKVRVGVDQDLAKKIVKLLKDSKLKVQAAIQGDAVRVSGAKRDVLQEAIALVKKQITDFPLQFGNFRD</sequence>
<reference key="1">
    <citation type="journal article" date="2006" name="Nat. Biotechnol.">
        <title>Complete genome of the mutualistic, N2-fixing grass endophyte Azoarcus sp. strain BH72.</title>
        <authorList>
            <person name="Krause A."/>
            <person name="Ramakumar A."/>
            <person name="Bartels D."/>
            <person name="Battistoni F."/>
            <person name="Bekel T."/>
            <person name="Boch J."/>
            <person name="Boehm M."/>
            <person name="Friedrich F."/>
            <person name="Hurek T."/>
            <person name="Krause L."/>
            <person name="Linke B."/>
            <person name="McHardy A.C."/>
            <person name="Sarkar A."/>
            <person name="Schneiker S."/>
            <person name="Syed A.A."/>
            <person name="Thauer R."/>
            <person name="Vorhoelter F.-J."/>
            <person name="Weidner S."/>
            <person name="Puehler A."/>
            <person name="Reinhold-Hurek B."/>
            <person name="Kaiser O."/>
            <person name="Goesmann A."/>
        </authorList>
    </citation>
    <scope>NUCLEOTIDE SEQUENCE [LARGE SCALE GENOMIC DNA]</scope>
    <source>
        <strain>BH72</strain>
    </source>
</reference>
<proteinExistence type="inferred from homology"/>
<comment type="function">
    <text evidence="1">Nucleotide-binding protein.</text>
</comment>
<comment type="similarity">
    <text evidence="1">Belongs to the YajQ family.</text>
</comment>
<protein>
    <recommendedName>
        <fullName evidence="1">Nucleotide-binding protein azo2183</fullName>
    </recommendedName>
</protein>
<gene>
    <name type="ordered locus">azo2183</name>
</gene>
<feature type="chain" id="PRO_1000051715" description="Nucleotide-binding protein azo2183">
    <location>
        <begin position="1"/>
        <end position="161"/>
    </location>
</feature>
<accession>A1K7J5</accession>
<organism>
    <name type="scientific">Azoarcus sp. (strain BH72)</name>
    <dbReference type="NCBI Taxonomy" id="418699"/>
    <lineage>
        <taxon>Bacteria</taxon>
        <taxon>Pseudomonadati</taxon>
        <taxon>Pseudomonadota</taxon>
        <taxon>Betaproteobacteria</taxon>
        <taxon>Rhodocyclales</taxon>
        <taxon>Zoogloeaceae</taxon>
        <taxon>Azoarcus</taxon>
    </lineage>
</organism>
<keyword id="KW-0547">Nucleotide-binding</keyword>
<keyword id="KW-1185">Reference proteome</keyword>
<dbReference type="EMBL" id="AM406670">
    <property type="protein sequence ID" value="CAL94800.1"/>
    <property type="molecule type" value="Genomic_DNA"/>
</dbReference>
<dbReference type="RefSeq" id="WP_011765914.1">
    <property type="nucleotide sequence ID" value="NC_008702.1"/>
</dbReference>
<dbReference type="SMR" id="A1K7J5"/>
<dbReference type="STRING" id="62928.azo2183"/>
<dbReference type="KEGG" id="aoa:dqs_2316"/>
<dbReference type="KEGG" id="azo:azo2183"/>
<dbReference type="eggNOG" id="COG1666">
    <property type="taxonomic scope" value="Bacteria"/>
</dbReference>
<dbReference type="HOGENOM" id="CLU_099839_1_0_4"/>
<dbReference type="OrthoDB" id="9801447at2"/>
<dbReference type="Proteomes" id="UP000002588">
    <property type="component" value="Chromosome"/>
</dbReference>
<dbReference type="GO" id="GO:0005829">
    <property type="term" value="C:cytosol"/>
    <property type="evidence" value="ECO:0007669"/>
    <property type="project" value="TreeGrafter"/>
</dbReference>
<dbReference type="GO" id="GO:0000166">
    <property type="term" value="F:nucleotide binding"/>
    <property type="evidence" value="ECO:0007669"/>
    <property type="project" value="TreeGrafter"/>
</dbReference>
<dbReference type="CDD" id="cd11740">
    <property type="entry name" value="YajQ_like"/>
    <property type="match status" value="1"/>
</dbReference>
<dbReference type="Gene3D" id="3.30.70.860">
    <property type="match status" value="1"/>
</dbReference>
<dbReference type="Gene3D" id="3.30.70.990">
    <property type="entry name" value="YajQ-like, domain 2"/>
    <property type="match status" value="1"/>
</dbReference>
<dbReference type="HAMAP" id="MF_00632">
    <property type="entry name" value="YajQ"/>
    <property type="match status" value="1"/>
</dbReference>
<dbReference type="InterPro" id="IPR007551">
    <property type="entry name" value="DUF520"/>
</dbReference>
<dbReference type="InterPro" id="IPR035571">
    <property type="entry name" value="UPF0234-like_C"/>
</dbReference>
<dbReference type="InterPro" id="IPR035570">
    <property type="entry name" value="UPF0234_N"/>
</dbReference>
<dbReference type="InterPro" id="IPR036183">
    <property type="entry name" value="YajQ-like_sf"/>
</dbReference>
<dbReference type="NCBIfam" id="NF003819">
    <property type="entry name" value="PRK05412.1"/>
    <property type="match status" value="1"/>
</dbReference>
<dbReference type="PANTHER" id="PTHR30476">
    <property type="entry name" value="UPF0234 PROTEIN YAJQ"/>
    <property type="match status" value="1"/>
</dbReference>
<dbReference type="PANTHER" id="PTHR30476:SF0">
    <property type="entry name" value="UPF0234 PROTEIN YAJQ"/>
    <property type="match status" value="1"/>
</dbReference>
<dbReference type="Pfam" id="PF04461">
    <property type="entry name" value="DUF520"/>
    <property type="match status" value="1"/>
</dbReference>
<dbReference type="SUPFAM" id="SSF89963">
    <property type="entry name" value="YajQ-like"/>
    <property type="match status" value="2"/>
</dbReference>